<organism>
    <name type="scientific">Pseudomonas putida (strain ATCC 700007 / DSM 6899 / JCM 31910 / BCRC 17059 / LMG 24140 / F1)</name>
    <dbReference type="NCBI Taxonomy" id="351746"/>
    <lineage>
        <taxon>Bacteria</taxon>
        <taxon>Pseudomonadati</taxon>
        <taxon>Pseudomonadota</taxon>
        <taxon>Gammaproteobacteria</taxon>
        <taxon>Pseudomonadales</taxon>
        <taxon>Pseudomonadaceae</taxon>
        <taxon>Pseudomonas</taxon>
    </lineage>
</organism>
<dbReference type="EMBL" id="CP000712">
    <property type="protein sequence ID" value="ABQ80531.1"/>
    <property type="molecule type" value="Genomic_DNA"/>
</dbReference>
<dbReference type="SMR" id="A5W8S1"/>
<dbReference type="KEGG" id="ppf:Pput_4409"/>
<dbReference type="eggNOG" id="COG0102">
    <property type="taxonomic scope" value="Bacteria"/>
</dbReference>
<dbReference type="HOGENOM" id="CLU_082184_2_2_6"/>
<dbReference type="GO" id="GO:0022625">
    <property type="term" value="C:cytosolic large ribosomal subunit"/>
    <property type="evidence" value="ECO:0007669"/>
    <property type="project" value="TreeGrafter"/>
</dbReference>
<dbReference type="GO" id="GO:0003729">
    <property type="term" value="F:mRNA binding"/>
    <property type="evidence" value="ECO:0007669"/>
    <property type="project" value="TreeGrafter"/>
</dbReference>
<dbReference type="GO" id="GO:0003735">
    <property type="term" value="F:structural constituent of ribosome"/>
    <property type="evidence" value="ECO:0007669"/>
    <property type="project" value="InterPro"/>
</dbReference>
<dbReference type="GO" id="GO:0017148">
    <property type="term" value="P:negative regulation of translation"/>
    <property type="evidence" value="ECO:0007669"/>
    <property type="project" value="TreeGrafter"/>
</dbReference>
<dbReference type="GO" id="GO:0006412">
    <property type="term" value="P:translation"/>
    <property type="evidence" value="ECO:0007669"/>
    <property type="project" value="UniProtKB-UniRule"/>
</dbReference>
<dbReference type="CDD" id="cd00392">
    <property type="entry name" value="Ribosomal_L13"/>
    <property type="match status" value="1"/>
</dbReference>
<dbReference type="FunFam" id="3.90.1180.10:FF:000001">
    <property type="entry name" value="50S ribosomal protein L13"/>
    <property type="match status" value="1"/>
</dbReference>
<dbReference type="Gene3D" id="3.90.1180.10">
    <property type="entry name" value="Ribosomal protein L13"/>
    <property type="match status" value="1"/>
</dbReference>
<dbReference type="HAMAP" id="MF_01366">
    <property type="entry name" value="Ribosomal_uL13"/>
    <property type="match status" value="1"/>
</dbReference>
<dbReference type="InterPro" id="IPR005822">
    <property type="entry name" value="Ribosomal_uL13"/>
</dbReference>
<dbReference type="InterPro" id="IPR005823">
    <property type="entry name" value="Ribosomal_uL13_bac-type"/>
</dbReference>
<dbReference type="InterPro" id="IPR023563">
    <property type="entry name" value="Ribosomal_uL13_CS"/>
</dbReference>
<dbReference type="InterPro" id="IPR036899">
    <property type="entry name" value="Ribosomal_uL13_sf"/>
</dbReference>
<dbReference type="NCBIfam" id="TIGR01066">
    <property type="entry name" value="rplM_bact"/>
    <property type="match status" value="1"/>
</dbReference>
<dbReference type="PANTHER" id="PTHR11545:SF2">
    <property type="entry name" value="LARGE RIBOSOMAL SUBUNIT PROTEIN UL13M"/>
    <property type="match status" value="1"/>
</dbReference>
<dbReference type="PANTHER" id="PTHR11545">
    <property type="entry name" value="RIBOSOMAL PROTEIN L13"/>
    <property type="match status" value="1"/>
</dbReference>
<dbReference type="Pfam" id="PF00572">
    <property type="entry name" value="Ribosomal_L13"/>
    <property type="match status" value="1"/>
</dbReference>
<dbReference type="PIRSF" id="PIRSF002181">
    <property type="entry name" value="Ribosomal_L13"/>
    <property type="match status" value="1"/>
</dbReference>
<dbReference type="SUPFAM" id="SSF52161">
    <property type="entry name" value="Ribosomal protein L13"/>
    <property type="match status" value="1"/>
</dbReference>
<dbReference type="PROSITE" id="PS00783">
    <property type="entry name" value="RIBOSOMAL_L13"/>
    <property type="match status" value="1"/>
</dbReference>
<keyword id="KW-0687">Ribonucleoprotein</keyword>
<keyword id="KW-0689">Ribosomal protein</keyword>
<accession>A5W8S1</accession>
<name>RL13_PSEP1</name>
<reference key="1">
    <citation type="submission" date="2007-05" db="EMBL/GenBank/DDBJ databases">
        <title>Complete sequence of Pseudomonas putida F1.</title>
        <authorList>
            <consortium name="US DOE Joint Genome Institute"/>
            <person name="Copeland A."/>
            <person name="Lucas S."/>
            <person name="Lapidus A."/>
            <person name="Barry K."/>
            <person name="Detter J.C."/>
            <person name="Glavina del Rio T."/>
            <person name="Hammon N."/>
            <person name="Israni S."/>
            <person name="Dalin E."/>
            <person name="Tice H."/>
            <person name="Pitluck S."/>
            <person name="Chain P."/>
            <person name="Malfatti S."/>
            <person name="Shin M."/>
            <person name="Vergez L."/>
            <person name="Schmutz J."/>
            <person name="Larimer F."/>
            <person name="Land M."/>
            <person name="Hauser L."/>
            <person name="Kyrpides N."/>
            <person name="Lykidis A."/>
            <person name="Parales R."/>
            <person name="Richardson P."/>
        </authorList>
    </citation>
    <scope>NUCLEOTIDE SEQUENCE [LARGE SCALE GENOMIC DNA]</scope>
    <source>
        <strain>ATCC 700007 / DSM 6899 / JCM 31910 / BCRC 17059 / LMG 24140 / F1</strain>
    </source>
</reference>
<sequence length="142" mass="15862">MKTFTAKPETVKREWFVVDAAGQTLGRLATEIATRLRGKHKPEYTPHVDTGDYIVVINAEQVRVTGAKSSDKMYYSHSGFPGGIKEINFEKLIAKAPERVIETAVKGMLPKNPLGRDMYRKLKVYAGAAHPHTAQQPQELKI</sequence>
<proteinExistence type="inferred from homology"/>
<protein>
    <recommendedName>
        <fullName evidence="1">Large ribosomal subunit protein uL13</fullName>
    </recommendedName>
    <alternativeName>
        <fullName evidence="2">50S ribosomal protein L13</fullName>
    </alternativeName>
</protein>
<evidence type="ECO:0000255" key="1">
    <source>
        <dbReference type="HAMAP-Rule" id="MF_01366"/>
    </source>
</evidence>
<evidence type="ECO:0000305" key="2"/>
<comment type="function">
    <text evidence="1">This protein is one of the early assembly proteins of the 50S ribosomal subunit, although it is not seen to bind rRNA by itself. It is important during the early stages of 50S assembly.</text>
</comment>
<comment type="subunit">
    <text evidence="1">Part of the 50S ribosomal subunit.</text>
</comment>
<comment type="similarity">
    <text evidence="1">Belongs to the universal ribosomal protein uL13 family.</text>
</comment>
<feature type="chain" id="PRO_1000055447" description="Large ribosomal subunit protein uL13">
    <location>
        <begin position="1"/>
        <end position="142"/>
    </location>
</feature>
<gene>
    <name evidence="1" type="primary">rplM</name>
    <name type="ordered locus">Pput_4409</name>
</gene>